<evidence type="ECO:0000255" key="1"/>
<evidence type="ECO:0000269" key="2">
    <source>
    </source>
</evidence>
<evidence type="ECO:0000303" key="3">
    <source>
    </source>
</evidence>
<evidence type="ECO:0000305" key="4"/>
<evidence type="ECO:0000312" key="5">
    <source>
        <dbReference type="EMBL" id="AAR18437.1"/>
    </source>
</evidence>
<evidence type="ECO:0007744" key="6">
    <source>
        <dbReference type="PDB" id="7TVY"/>
    </source>
</evidence>
<evidence type="ECO:0007829" key="7">
    <source>
        <dbReference type="PDB" id="7TVY"/>
    </source>
</evidence>
<feature type="signal peptide" evidence="1">
    <location>
        <begin position="1"/>
        <end position="18"/>
    </location>
</feature>
<feature type="chain" id="PRO_5004281311" description="Short form salivary protein D7S" evidence="1">
    <location>
        <begin position="19"/>
        <end position="161"/>
    </location>
</feature>
<feature type="disulfide bond" evidence="2 6">
    <location>
        <begin position="33"/>
        <end position="67"/>
    </location>
</feature>
<feature type="disulfide bond" evidence="2 6">
    <location>
        <begin position="47"/>
        <end position="155"/>
    </location>
</feature>
<feature type="disulfide bond" evidence="2 6">
    <location>
        <begin position="109"/>
        <end position="125"/>
    </location>
</feature>
<feature type="helix" evidence="7">
    <location>
        <begin position="31"/>
        <end position="34"/>
    </location>
</feature>
<feature type="helix" evidence="7">
    <location>
        <begin position="43"/>
        <end position="50"/>
    </location>
</feature>
<feature type="helix" evidence="7">
    <location>
        <begin position="59"/>
        <end position="71"/>
    </location>
</feature>
<feature type="helix" evidence="7">
    <location>
        <begin position="83"/>
        <end position="92"/>
    </location>
</feature>
<feature type="helix" evidence="7">
    <location>
        <begin position="99"/>
        <end position="109"/>
    </location>
</feature>
<feature type="turn" evidence="7">
    <location>
        <begin position="110"/>
        <end position="112"/>
    </location>
</feature>
<feature type="helix" evidence="7">
    <location>
        <begin position="119"/>
        <end position="126"/>
    </location>
</feature>
<feature type="helix" evidence="7">
    <location>
        <begin position="132"/>
        <end position="141"/>
    </location>
</feature>
<feature type="helix" evidence="7">
    <location>
        <begin position="144"/>
        <end position="146"/>
    </location>
</feature>
<feature type="turn" evidence="7">
    <location>
        <begin position="150"/>
        <end position="152"/>
    </location>
</feature>
<name>D7S_CULQU</name>
<protein>
    <recommendedName>
        <fullName evidence="4">Short form salivary protein D7S</fullName>
    </recommendedName>
</protein>
<dbReference type="EMBL" id="AY388549">
    <property type="protein sequence ID" value="AAR18437.1"/>
    <property type="molecule type" value="mRNA"/>
</dbReference>
<dbReference type="PDB" id="7TVY">
    <property type="method" value="X-ray"/>
    <property type="resolution" value="1.98 A"/>
    <property type="chains" value="A/B/C/D=19-161"/>
</dbReference>
<dbReference type="PDBsum" id="7TVY"/>
<dbReference type="SMR" id="Q6TS00"/>
<dbReference type="VEuPathDB" id="VectorBase:CPIJ014546"/>
<dbReference type="VEuPathDB" id="VectorBase:CQUJHB010110"/>
<dbReference type="Proteomes" id="UP000002320">
    <property type="component" value="Unplaced"/>
</dbReference>
<dbReference type="GO" id="GO:0005576">
    <property type="term" value="C:extracellular region"/>
    <property type="evidence" value="ECO:0007669"/>
    <property type="project" value="UniProtKB-SubCell"/>
</dbReference>
<dbReference type="GO" id="GO:0005549">
    <property type="term" value="F:odorant binding"/>
    <property type="evidence" value="ECO:0007669"/>
    <property type="project" value="InterPro"/>
</dbReference>
<dbReference type="Gene3D" id="1.10.238.20">
    <property type="entry name" value="Pheromone/general odorant binding protein domain"/>
    <property type="match status" value="1"/>
</dbReference>
<dbReference type="InterPro" id="IPR006170">
    <property type="entry name" value="PBP/GOBP"/>
</dbReference>
<dbReference type="InterPro" id="IPR036728">
    <property type="entry name" value="PBP_GOBP_sf"/>
</dbReference>
<dbReference type="Pfam" id="PF01395">
    <property type="entry name" value="PBP_GOBP"/>
    <property type="match status" value="1"/>
</dbReference>
<dbReference type="SUPFAM" id="SSF47565">
    <property type="entry name" value="Insect pheromone/odorant-binding proteins"/>
    <property type="match status" value="1"/>
</dbReference>
<accession>Q6TS00</accession>
<comment type="function">
    <text evidence="2">In contrast to the related D7 salivary proteins, does not bind serotonin.</text>
</comment>
<comment type="subcellular location">
    <subcellularLocation>
        <location evidence="4">Secreted</location>
    </subcellularLocation>
</comment>
<comment type="similarity">
    <text evidence="4">Belongs to the PBP/GOBP family.</text>
</comment>
<keyword id="KW-0002">3D-structure</keyword>
<keyword id="KW-1015">Disulfide bond</keyword>
<keyword id="KW-1185">Reference proteome</keyword>
<keyword id="KW-0964">Secreted</keyword>
<keyword id="KW-0732">Signal</keyword>
<proteinExistence type="evidence at protein level"/>
<reference evidence="5" key="1">
    <citation type="submission" date="2003-09" db="EMBL/GenBank/DDBJ databases">
        <title>An insight into the salivary transcriptome and proteome of the adult female mosquito Culex pipiens quinquefasciatus.</title>
        <authorList>
            <person name="Ribeiro J.M.C."/>
            <person name="Charlab R."/>
            <person name="Pham V.M."/>
            <person name="Garfield M.K."/>
            <person name="Valenzuela J.G."/>
        </authorList>
    </citation>
    <scope>NUCLEOTIDE SEQUENCE [LARGE SCALE MRNA]</scope>
    <source>
        <strain evidence="5">Vero Beach</strain>
        <tissue evidence="5">Salivary gland</tissue>
    </source>
</reference>
<reference evidence="6" key="2">
    <citation type="journal article" date="2022" name="Insect Biochem. Mol. Biol.">
        <title>Functional aspects of evolution in a cluster of salivary protein genes from mosquitoes.</title>
        <authorList>
            <person name="Alvarenga P.H."/>
            <person name="Dias D.R."/>
            <person name="Xu X."/>
            <person name="Francischetti I.M.B."/>
            <person name="Gittis A.G."/>
            <person name="Arp G."/>
            <person name="Garboczi D.N."/>
            <person name="Ribeiro J.M.C."/>
            <person name="Andersen J.F."/>
        </authorList>
    </citation>
    <scope>X-RAY CRYSTALLOGRAPHY (1.98 ANGSTROMS) OF 19-161</scope>
    <scope>FUNCTION</scope>
    <scope>DISULFIDE BONDS</scope>
</reference>
<gene>
    <name evidence="3" type="primary">D7S</name>
</gene>
<organism evidence="5">
    <name type="scientific">Culex quinquefasciatus</name>
    <name type="common">Southern house mosquito</name>
    <name type="synonym">Culex pungens</name>
    <dbReference type="NCBI Taxonomy" id="7176"/>
    <lineage>
        <taxon>Eukaryota</taxon>
        <taxon>Metazoa</taxon>
        <taxon>Ecdysozoa</taxon>
        <taxon>Arthropoda</taxon>
        <taxon>Hexapoda</taxon>
        <taxon>Insecta</taxon>
        <taxon>Pterygota</taxon>
        <taxon>Neoptera</taxon>
        <taxon>Endopterygota</taxon>
        <taxon>Diptera</taxon>
        <taxon>Nematocera</taxon>
        <taxon>Culicoidea</taxon>
        <taxon>Culicidae</taxon>
        <taxon>Culicinae</taxon>
        <taxon>Culicini</taxon>
        <taxon>Culex</taxon>
        <taxon>Culex</taxon>
    </lineage>
</organism>
<sequence length="161" mass="18753">MKFPSILLAILLFKPITARFTPLGIDEFYIKPCERKIVYTTDKHDKCLMRRLEIEMDTGENQGYVKCVFKEFGYLNGEGQFNKQALLKDYHQAGFKNKDKAVLESYDGCMKNYGPTPNAMKILDCVTKDKDFPKVINARRERNSDWKPDWIQAYCGVTKLF</sequence>